<dbReference type="EMBL" id="AJ292969">
    <property type="protein sequence ID" value="CAC13972.1"/>
    <property type="molecule type" value="mRNA"/>
</dbReference>
<dbReference type="EMBL" id="AK021500">
    <property type="protein sequence ID" value="BAB13835.1"/>
    <property type="molecule type" value="mRNA"/>
</dbReference>
<dbReference type="EMBL" id="AK023071">
    <property type="protein sequence ID" value="BAB14390.1"/>
    <property type="molecule type" value="mRNA"/>
</dbReference>
<dbReference type="EMBL" id="AK290883">
    <property type="protein sequence ID" value="BAF83572.1"/>
    <property type="molecule type" value="mRNA"/>
</dbReference>
<dbReference type="EMBL" id="CR457297">
    <property type="protein sequence ID" value="CAG33578.1"/>
    <property type="molecule type" value="mRNA"/>
</dbReference>
<dbReference type="EMBL" id="CH471078">
    <property type="protein sequence ID" value="EAW65702.1"/>
    <property type="molecule type" value="Genomic_DNA"/>
</dbReference>
<dbReference type="EMBL" id="CH471078">
    <property type="protein sequence ID" value="EAW65704.1"/>
    <property type="molecule type" value="Genomic_DNA"/>
</dbReference>
<dbReference type="EMBL" id="BC020537">
    <property type="protein sequence ID" value="AAH20537.1"/>
    <property type="molecule type" value="mRNA"/>
</dbReference>
<dbReference type="CCDS" id="CCDS9701.1"/>
<dbReference type="PIR" id="JC7507">
    <property type="entry name" value="JC7507"/>
</dbReference>
<dbReference type="RefSeq" id="NP_068590.1">
    <property type="nucleotide sequence ID" value="NM_021818.4"/>
</dbReference>
<dbReference type="PDB" id="6AO5">
    <property type="method" value="X-ray"/>
    <property type="resolution" value="2.96 A"/>
    <property type="chains" value="B=291-383"/>
</dbReference>
<dbReference type="PDBsum" id="6AO5"/>
<dbReference type="SMR" id="Q9H4B6"/>
<dbReference type="BioGRID" id="121917">
    <property type="interactions" value="177"/>
</dbReference>
<dbReference type="CORUM" id="Q9H4B6"/>
<dbReference type="DIP" id="DIP-36127N"/>
<dbReference type="FunCoup" id="Q9H4B6">
    <property type="interactions" value="3407"/>
</dbReference>
<dbReference type="IntAct" id="Q9H4B6">
    <property type="interactions" value="141"/>
</dbReference>
<dbReference type="MINT" id="Q9H4B6"/>
<dbReference type="STRING" id="9606.ENSP00000324729"/>
<dbReference type="iPTMnet" id="Q9H4B6"/>
<dbReference type="PhosphoSitePlus" id="Q9H4B6"/>
<dbReference type="BioMuta" id="SAV1"/>
<dbReference type="DMDM" id="32699681"/>
<dbReference type="jPOST" id="Q9H4B6"/>
<dbReference type="MassIVE" id="Q9H4B6"/>
<dbReference type="PaxDb" id="9606-ENSP00000324729"/>
<dbReference type="PeptideAtlas" id="Q9H4B6"/>
<dbReference type="ProteomicsDB" id="80818"/>
<dbReference type="Pumba" id="Q9H4B6"/>
<dbReference type="Antibodypedia" id="23683">
    <property type="antibodies" value="253 antibodies from 28 providers"/>
</dbReference>
<dbReference type="DNASU" id="60485"/>
<dbReference type="Ensembl" id="ENST00000324679.5">
    <property type="protein sequence ID" value="ENSP00000324729.4"/>
    <property type="gene ID" value="ENSG00000151748.15"/>
</dbReference>
<dbReference type="GeneID" id="60485"/>
<dbReference type="KEGG" id="hsa:60485"/>
<dbReference type="MANE-Select" id="ENST00000324679.5">
    <property type="protein sequence ID" value="ENSP00000324729.4"/>
    <property type="RefSeq nucleotide sequence ID" value="NM_021818.4"/>
    <property type="RefSeq protein sequence ID" value="NP_068590.1"/>
</dbReference>
<dbReference type="UCSC" id="uc001wyh.3">
    <property type="organism name" value="human"/>
</dbReference>
<dbReference type="AGR" id="HGNC:17795"/>
<dbReference type="CTD" id="60485"/>
<dbReference type="DisGeNET" id="60485"/>
<dbReference type="GeneCards" id="SAV1"/>
<dbReference type="HGNC" id="HGNC:17795">
    <property type="gene designation" value="SAV1"/>
</dbReference>
<dbReference type="HPA" id="ENSG00000151748">
    <property type="expression patterns" value="Low tissue specificity"/>
</dbReference>
<dbReference type="MIM" id="607203">
    <property type="type" value="gene"/>
</dbReference>
<dbReference type="neXtProt" id="NX_Q9H4B6"/>
<dbReference type="OpenTargets" id="ENSG00000151748"/>
<dbReference type="PharmGKB" id="PA134875018"/>
<dbReference type="VEuPathDB" id="HostDB:ENSG00000151748"/>
<dbReference type="eggNOG" id="KOG1891">
    <property type="taxonomic scope" value="Eukaryota"/>
</dbReference>
<dbReference type="GeneTree" id="ENSGT00940000156106"/>
<dbReference type="HOGENOM" id="CLU_060422_0_0_1"/>
<dbReference type="InParanoid" id="Q9H4B6"/>
<dbReference type="OMA" id="AARYYYP"/>
<dbReference type="OrthoDB" id="5339429at2759"/>
<dbReference type="PAN-GO" id="Q9H4B6">
    <property type="GO annotations" value="9 GO annotations based on evolutionary models"/>
</dbReference>
<dbReference type="PhylomeDB" id="Q9H4B6"/>
<dbReference type="TreeFam" id="TF317631"/>
<dbReference type="PathwayCommons" id="Q9H4B6"/>
<dbReference type="Reactome" id="R-HSA-2028269">
    <property type="pathway name" value="Signaling by Hippo"/>
</dbReference>
<dbReference type="SignaLink" id="Q9H4B6"/>
<dbReference type="SIGNOR" id="Q9H4B6"/>
<dbReference type="BioGRID-ORCS" id="60485">
    <property type="hits" value="21 hits in 1170 CRISPR screens"/>
</dbReference>
<dbReference type="CD-CODE" id="8C2F96ED">
    <property type="entry name" value="Centrosome"/>
</dbReference>
<dbReference type="ChiTaRS" id="SAV1">
    <property type="organism name" value="human"/>
</dbReference>
<dbReference type="GeneWiki" id="SAV1"/>
<dbReference type="GenomeRNAi" id="60485"/>
<dbReference type="Pharos" id="Q9H4B6">
    <property type="development level" value="Tbio"/>
</dbReference>
<dbReference type="PRO" id="PR:Q9H4B6"/>
<dbReference type="Proteomes" id="UP000005640">
    <property type="component" value="Chromosome 14"/>
</dbReference>
<dbReference type="RNAct" id="Q9H4B6">
    <property type="molecule type" value="protein"/>
</dbReference>
<dbReference type="Bgee" id="ENSG00000151748">
    <property type="expression patterns" value="Expressed in oocyte and 196 other cell types or tissues"/>
</dbReference>
<dbReference type="ExpressionAtlas" id="Q9H4B6">
    <property type="expression patterns" value="baseline and differential"/>
</dbReference>
<dbReference type="GO" id="GO:0005737">
    <property type="term" value="C:cytoplasm"/>
    <property type="evidence" value="ECO:0000314"/>
    <property type="project" value="UniProtKB"/>
</dbReference>
<dbReference type="GO" id="GO:0005829">
    <property type="term" value="C:cytosol"/>
    <property type="evidence" value="ECO:0000314"/>
    <property type="project" value="HPA"/>
</dbReference>
<dbReference type="GO" id="GO:0005634">
    <property type="term" value="C:nucleus"/>
    <property type="evidence" value="ECO:0000314"/>
    <property type="project" value="UniProtKB"/>
</dbReference>
<dbReference type="GO" id="GO:0042802">
    <property type="term" value="F:identical protein binding"/>
    <property type="evidence" value="ECO:0000353"/>
    <property type="project" value="IntAct"/>
</dbReference>
<dbReference type="GO" id="GO:0060090">
    <property type="term" value="F:molecular adaptor activity"/>
    <property type="evidence" value="ECO:0007669"/>
    <property type="project" value="InterPro"/>
</dbReference>
<dbReference type="GO" id="GO:0043539">
    <property type="term" value="F:protein serine/threonine kinase activator activity"/>
    <property type="evidence" value="ECO:0000314"/>
    <property type="project" value="UniProtKB"/>
</dbReference>
<dbReference type="GO" id="GO:0140537">
    <property type="term" value="F:transcription regulator activator activity"/>
    <property type="evidence" value="ECO:0000316"/>
    <property type="project" value="MGI"/>
</dbReference>
<dbReference type="GO" id="GO:0060038">
    <property type="term" value="P:cardiac muscle cell proliferation"/>
    <property type="evidence" value="ECO:0007669"/>
    <property type="project" value="Ensembl"/>
</dbReference>
<dbReference type="GO" id="GO:0050673">
    <property type="term" value="P:epithelial cell proliferation"/>
    <property type="evidence" value="ECO:0007669"/>
    <property type="project" value="Ensembl"/>
</dbReference>
<dbReference type="GO" id="GO:0001942">
    <property type="term" value="P:hair follicle development"/>
    <property type="evidence" value="ECO:0007669"/>
    <property type="project" value="Ensembl"/>
</dbReference>
<dbReference type="GO" id="GO:0035329">
    <property type="term" value="P:hippo signaling"/>
    <property type="evidence" value="ECO:0000314"/>
    <property type="project" value="UniProt"/>
</dbReference>
<dbReference type="GO" id="GO:0060575">
    <property type="term" value="P:intestinal epithelial cell differentiation"/>
    <property type="evidence" value="ECO:0007669"/>
    <property type="project" value="Ensembl"/>
</dbReference>
<dbReference type="GO" id="GO:0097283">
    <property type="term" value="P:keratinocyte apoptotic process"/>
    <property type="evidence" value="ECO:0007669"/>
    <property type="project" value="Ensembl"/>
</dbReference>
<dbReference type="GO" id="GO:0030216">
    <property type="term" value="P:keratinocyte differentiation"/>
    <property type="evidence" value="ECO:0007669"/>
    <property type="project" value="Ensembl"/>
</dbReference>
<dbReference type="GO" id="GO:0060487">
    <property type="term" value="P:lung epithelial cell differentiation"/>
    <property type="evidence" value="ECO:0007669"/>
    <property type="project" value="Ensembl"/>
</dbReference>
<dbReference type="GO" id="GO:0060044">
    <property type="term" value="P:negative regulation of cardiac muscle cell proliferation"/>
    <property type="evidence" value="ECO:0007669"/>
    <property type="project" value="Ensembl"/>
</dbReference>
<dbReference type="GO" id="GO:0008285">
    <property type="term" value="P:negative regulation of cell population proliferation"/>
    <property type="evidence" value="ECO:0000318"/>
    <property type="project" value="GO_Central"/>
</dbReference>
<dbReference type="GO" id="GO:0050680">
    <property type="term" value="P:negative regulation of epithelial cell proliferation"/>
    <property type="evidence" value="ECO:0007669"/>
    <property type="project" value="Ensembl"/>
</dbReference>
<dbReference type="GO" id="GO:0043065">
    <property type="term" value="P:positive regulation of apoptotic process"/>
    <property type="evidence" value="ECO:0000318"/>
    <property type="project" value="GO_Central"/>
</dbReference>
<dbReference type="GO" id="GO:0045600">
    <property type="term" value="P:positive regulation of fat cell differentiation"/>
    <property type="evidence" value="ECO:0007669"/>
    <property type="project" value="Ensembl"/>
</dbReference>
<dbReference type="GO" id="GO:1902174">
    <property type="term" value="P:positive regulation of keratinocyte apoptotic process"/>
    <property type="evidence" value="ECO:0007669"/>
    <property type="project" value="Ensembl"/>
</dbReference>
<dbReference type="GO" id="GO:0050821">
    <property type="term" value="P:protein stabilization"/>
    <property type="evidence" value="ECO:0000314"/>
    <property type="project" value="MGI"/>
</dbReference>
<dbReference type="GO" id="GO:2000036">
    <property type="term" value="P:regulation of stem cell population maintenance"/>
    <property type="evidence" value="ECO:0007669"/>
    <property type="project" value="Ensembl"/>
</dbReference>
<dbReference type="GO" id="GO:0060412">
    <property type="term" value="P:ventricular septum morphogenesis"/>
    <property type="evidence" value="ECO:0007669"/>
    <property type="project" value="Ensembl"/>
</dbReference>
<dbReference type="CDD" id="cd21433">
    <property type="entry name" value="SARAH_Sav"/>
    <property type="match status" value="1"/>
</dbReference>
<dbReference type="CDD" id="cd00201">
    <property type="entry name" value="WW"/>
    <property type="match status" value="2"/>
</dbReference>
<dbReference type="FunFam" id="2.20.70.10:FF:000035">
    <property type="entry name" value="Salvador homolog 1 (Drosophila)"/>
    <property type="match status" value="1"/>
</dbReference>
<dbReference type="Gene3D" id="2.20.70.10">
    <property type="match status" value="2"/>
</dbReference>
<dbReference type="InterPro" id="IPR011524">
    <property type="entry name" value="SARAH_dom"/>
</dbReference>
<dbReference type="InterPro" id="IPR030030">
    <property type="entry name" value="Sav"/>
</dbReference>
<dbReference type="InterPro" id="IPR001202">
    <property type="entry name" value="WW_dom"/>
</dbReference>
<dbReference type="InterPro" id="IPR036020">
    <property type="entry name" value="WW_dom_sf"/>
</dbReference>
<dbReference type="PANTHER" id="PTHR47522:SF2">
    <property type="entry name" value="PROTEIN SALVADOR HOMOLOG 1"/>
    <property type="match status" value="1"/>
</dbReference>
<dbReference type="PANTHER" id="PTHR47522">
    <property type="entry name" value="SALVADOR FAMILY WW DOMAIN-CONTAINING PROTEIN 1"/>
    <property type="match status" value="1"/>
</dbReference>
<dbReference type="Pfam" id="PF00397">
    <property type="entry name" value="WW"/>
    <property type="match status" value="1"/>
</dbReference>
<dbReference type="SMART" id="SM00456">
    <property type="entry name" value="WW"/>
    <property type="match status" value="2"/>
</dbReference>
<dbReference type="SUPFAM" id="SSF51045">
    <property type="entry name" value="WW domain"/>
    <property type="match status" value="2"/>
</dbReference>
<dbReference type="PROSITE" id="PS50951">
    <property type="entry name" value="SARAH"/>
    <property type="match status" value="1"/>
</dbReference>
<dbReference type="PROSITE" id="PS50020">
    <property type="entry name" value="WW_DOMAIN_2"/>
    <property type="match status" value="2"/>
</dbReference>
<feature type="chain" id="PRO_0000076060" description="Protein salvador homolog 1">
    <location>
        <begin position="1"/>
        <end position="383"/>
    </location>
</feature>
<feature type="domain" description="WW 1" evidence="3">
    <location>
        <begin position="199"/>
        <end position="232"/>
    </location>
</feature>
<feature type="domain" description="WW 2" evidence="3">
    <location>
        <begin position="234"/>
        <end position="267"/>
    </location>
</feature>
<feature type="domain" description="SARAH" evidence="4">
    <location>
        <begin position="321"/>
        <end position="368"/>
    </location>
</feature>
<feature type="coiled-coil region" evidence="2">
    <location>
        <begin position="344"/>
        <end position="373"/>
    </location>
</feature>
<feature type="modified residue" description="Phosphoserine" evidence="18">
    <location>
        <position position="94"/>
    </location>
</feature>
<feature type="modified residue" description="Phosphoserine" evidence="1">
    <location>
        <position position="136"/>
    </location>
</feature>
<feature type="modified residue" description="Phosphothreonine" evidence="17">
    <location>
        <position position="210"/>
    </location>
</feature>
<feature type="sequence variant" id="VAR_015880" description="In a colon cancer cell line." evidence="5">
    <original>A</original>
    <variation>D</variation>
    <location>
        <position position="185"/>
    </location>
</feature>
<feature type="mutagenesis site" description="Loss of interaction with STK3." evidence="13">
    <original>E</original>
    <variation>A</variation>
    <location>
        <position position="346"/>
    </location>
</feature>
<feature type="mutagenesis site" description="Loss of interaction with STK3." evidence="13">
    <original>I</original>
    <variation>A</variation>
    <location>
        <position position="350"/>
    </location>
</feature>
<feature type="mutagenesis site" description="Loss of interaction with STK3." evidence="13">
    <original>Y</original>
    <variation>A</variation>
    <location>
        <position position="357"/>
    </location>
</feature>
<feature type="mutagenesis site" description="Loss of interaction with STK3." evidence="13">
    <original>R</original>
    <variation>A</variation>
    <location>
        <position position="358"/>
    </location>
</feature>
<feature type="mutagenesis site" description="Loss of interaction with STK3." evidence="13">
    <original>L</original>
    <variation>A</variation>
    <location>
        <position position="361"/>
    </location>
</feature>
<feature type="mutagenesis site" description="Loss of interaction with STK3." evidence="13">
    <original>L</original>
    <variation>A</variation>
    <location>
        <position position="365"/>
    </location>
</feature>
<feature type="mutagenesis site" description="Loss of interaction with STK3." evidence="13">
    <original>R</original>
    <variation>A</variation>
    <location>
        <position position="368"/>
    </location>
</feature>
<feature type="sequence conflict" description="In Ref. 1; CAC13972." evidence="14" ref="1">
    <original>K</original>
    <variation>Q</variation>
    <location>
        <position position="5"/>
    </location>
</feature>
<feature type="sequence conflict" description="In Ref. 3; CAG33578." evidence="14" ref="3">
    <original>Q</original>
    <variation>R</variation>
    <location>
        <position position="18"/>
    </location>
</feature>
<feature type="sequence conflict" description="In Ref. 2; BAB13835." evidence="14" ref="2">
    <original>L</original>
    <variation>F</variation>
    <location>
        <position position="292"/>
    </location>
</feature>
<feature type="helix" evidence="19">
    <location>
        <begin position="298"/>
        <end position="300"/>
    </location>
</feature>
<feature type="helix" evidence="19">
    <location>
        <begin position="306"/>
        <end position="313"/>
    </location>
</feature>
<feature type="strand" evidence="19">
    <location>
        <begin position="316"/>
        <end position="319"/>
    </location>
</feature>
<feature type="helix" evidence="19">
    <location>
        <begin position="329"/>
        <end position="375"/>
    </location>
</feature>
<name>SAV1_HUMAN</name>
<comment type="function">
    <text evidence="7 8 10 11 13">Regulator of STK3/MST2 and STK4/MST1 in the Hippo signaling pathway which plays a pivotal role in organ size control and tumor suppression by restricting proliferation and promoting apoptosis (PubMed:29063833). The core of this pathway is composed of a kinase cascade wherein STK3/MST2 and STK4/MST1, in complex with its regulatory protein SAV1, phosphorylates and activates LATS1/2 in complex with its regulatory protein MOB1, which in turn phosphorylates and inactivates YAP1 oncoprotein and WWTR1/TAZ. Phosphorylation of YAP1 by LATS1/2 inhibits its translocation into the nucleus to regulate cellular genes important for cell proliferation, cell death, and cell migration. SAV1 is required for STK3/MST2 and STK4/MST1 activation and promotes cell-cycle exit and terminal differentiation in developing epithelial tissues. Plays a role in centrosome disjunction by regulating the localization of NEK2 to centrosomes, and its ability to phosphorylate CROCC and CEP250. In conjunction with STK3/MST2, activates the transcriptional activity of ESR1 through the modulation of its phosphorylation.</text>
</comment>
<comment type="subunit">
    <text evidence="6 7 8 9 10 11 12 13">Homodimer. Stabilized through interaction with STK3/MST2 or STK4/MST1 (PubMed:15688006, PubMed:16930133, PubMed:19212654, PubMed:28087714, PubMed:29063833). Interacts (via SARAH domain) with isoform 1 of NEK2 (PubMed:21076410). Interacts with ESR1 only in the presence of STK3/MST2 (PubMed:21104395). Interacts with WTIP and AJUBA (PubMed:20303269).</text>
</comment>
<comment type="interaction">
    <interactant intactId="EBI-1017775">
        <id>Q9H4B6</id>
    </interactant>
    <interactant intactId="EBI-357001">
        <id>O00165</id>
        <label>HAX1</label>
    </interactant>
    <organismsDiffer>false</organismsDiffer>
    <experiments>7</experiments>
</comment>
<comment type="interaction">
    <interactant intactId="EBI-1017775">
        <id>Q9H4B6</id>
    </interactant>
    <interactant intactId="EBI-1017775">
        <id>Q9H4B6</id>
        <label>SAV1</label>
    </interactant>
    <organismsDiffer>false</organismsDiffer>
    <experiments>2</experiments>
</comment>
<comment type="interaction">
    <interactant intactId="EBI-1017775">
        <id>Q9H4B6</id>
    </interactant>
    <interactant intactId="EBI-992580">
        <id>Q13188</id>
        <label>STK3</label>
    </interactant>
    <organismsDiffer>false</organismsDiffer>
    <experiments>29</experiments>
</comment>
<comment type="interaction">
    <interactant intactId="EBI-1017775">
        <id>Q9H4B6</id>
    </interactant>
    <interactant intactId="EBI-367376">
        <id>Q13043</id>
        <label>STK4</label>
    </interactant>
    <organismsDiffer>false</organismsDiffer>
    <experiments>22</experiments>
</comment>
<comment type="interaction">
    <interactant intactId="EBI-1017775">
        <id>Q9H4B6</id>
    </interactant>
    <interactant intactId="EBI-15638366">
        <id>Q13043-1</id>
        <label>STK4</label>
    </interactant>
    <organismsDiffer>false</organismsDiffer>
    <experiments>2</experiments>
</comment>
<comment type="subcellular location">
    <subcellularLocation>
        <location evidence="8">Nucleus</location>
    </subcellularLocation>
    <subcellularLocation>
        <location evidence="8 13">Cytoplasm</location>
    </subcellularLocation>
</comment>
<comment type="tissue specificity">
    <text evidence="8">Ubiquitously expressed in adult tissues with highest expression in the pancreas, aorta and interventricular septum and lowest expression in skeletal muscle. Expression was higher in fetal than in the adult heart. Expressed in various cell lines.</text>
</comment>
<comment type="PTM">
    <text evidence="7">Phosphorylated by STK3/MST2 and STK4/MST1. Phosphorylation is not required for SAV1 stability and may increase the number of protein binding sites on the scaffold molecule.</text>
</comment>
<comment type="online information" name="Atlas of Genetics and Cytogenetics in Oncology and Haematology">
    <link uri="https://atlasgeneticsoncology.org/gene/42206/SAV1"/>
</comment>
<protein>
    <recommendedName>
        <fullName>Protein salvador homolog 1</fullName>
    </recommendedName>
    <alternativeName>
        <fullName>45 kDa WW domain protein</fullName>
        <shortName>hWW45</shortName>
    </alternativeName>
</protein>
<keyword id="KW-0002">3D-structure</keyword>
<keyword id="KW-0175">Coiled coil</keyword>
<keyword id="KW-0963">Cytoplasm</keyword>
<keyword id="KW-0539">Nucleus</keyword>
<keyword id="KW-0597">Phosphoprotein</keyword>
<keyword id="KW-1267">Proteomics identification</keyword>
<keyword id="KW-1185">Reference proteome</keyword>
<keyword id="KW-0677">Repeat</keyword>
<organism>
    <name type="scientific">Homo sapiens</name>
    <name type="common">Human</name>
    <dbReference type="NCBI Taxonomy" id="9606"/>
    <lineage>
        <taxon>Eukaryota</taxon>
        <taxon>Metazoa</taxon>
        <taxon>Chordata</taxon>
        <taxon>Craniata</taxon>
        <taxon>Vertebrata</taxon>
        <taxon>Euteleostomi</taxon>
        <taxon>Mammalia</taxon>
        <taxon>Eutheria</taxon>
        <taxon>Euarchontoglires</taxon>
        <taxon>Primates</taxon>
        <taxon>Haplorrhini</taxon>
        <taxon>Catarrhini</taxon>
        <taxon>Hominidae</taxon>
        <taxon>Homo</taxon>
    </lineage>
</organism>
<accession>Q9H4B6</accession>
<accession>A8K4B8</accession>
<accession>D3DSB6</accession>
<accession>Q6IA58</accession>
<accession>Q9H949</accession>
<accession>Q9HAK9</accession>
<evidence type="ECO:0000250" key="1">
    <source>
        <dbReference type="UniProtKB" id="Q8VEB2"/>
    </source>
</evidence>
<evidence type="ECO:0000255" key="2"/>
<evidence type="ECO:0000255" key="3">
    <source>
        <dbReference type="PROSITE-ProRule" id="PRU00224"/>
    </source>
</evidence>
<evidence type="ECO:0000255" key="4">
    <source>
        <dbReference type="PROSITE-ProRule" id="PRU00310"/>
    </source>
</evidence>
<evidence type="ECO:0000269" key="5">
    <source>
    </source>
</evidence>
<evidence type="ECO:0000269" key="6">
    <source>
    </source>
</evidence>
<evidence type="ECO:0000269" key="7">
    <source>
    </source>
</evidence>
<evidence type="ECO:0000269" key="8">
    <source>
    </source>
</evidence>
<evidence type="ECO:0000269" key="9">
    <source>
    </source>
</evidence>
<evidence type="ECO:0000269" key="10">
    <source>
    </source>
</evidence>
<evidence type="ECO:0000269" key="11">
    <source>
    </source>
</evidence>
<evidence type="ECO:0000269" key="12">
    <source>
    </source>
</evidence>
<evidence type="ECO:0000269" key="13">
    <source>
    </source>
</evidence>
<evidence type="ECO:0000305" key="14"/>
<evidence type="ECO:0000312" key="15">
    <source>
        <dbReference type="HGNC" id="HGNC:17795"/>
    </source>
</evidence>
<evidence type="ECO:0007744" key="16">
    <source>
        <dbReference type="PDB" id="6AO5"/>
    </source>
</evidence>
<evidence type="ECO:0007744" key="17">
    <source>
    </source>
</evidence>
<evidence type="ECO:0007744" key="18">
    <source>
    </source>
</evidence>
<evidence type="ECO:0007829" key="19">
    <source>
        <dbReference type="PDB" id="6AO5"/>
    </source>
</evidence>
<sequence>MLSRKKTKNEVSKPAEVQGKYVKKETSPLLRNLMPSFIRHGPTIPRRTDICLPDSSPNAFSTSGDVVSRNQSFLRTPIQRTPHEIMRRESNRLSAPSYLARSLADVPREYGSSQSFVTEVSFAVENGDSGSRYYYSDNFFDGQRKRPLGDRAHEDYRYYEYNHDLFQRMPQNQGRHASGIGRVAATSLGNLTNHGSEDLPLPPGWSVDWTMRGRKYYIDHNTNTTHWSHPLEREGLPPGWERVESSEFGTYYVDHTNKKAQYRHPCAPSVPRYDQPPPVTYQPQQTERNQSLLVPANPYHTAEIPDWLQVYARAPVKYDHILKWELFQLADLDTYQGMLKLLFMKELEQIVKMYEAYRQALLTELENRKQRQQWYAQQHGKNF</sequence>
<reference key="1">
    <citation type="journal article" date="2000" name="Biochem. Biophys. Res. Commun.">
        <title>Cloning, expression and mapping of hWW45, a novel WW-domain containing gene.</title>
        <authorList>
            <person name="Valverde P."/>
        </authorList>
    </citation>
    <scope>NUCLEOTIDE SEQUENCE [MRNA]</scope>
</reference>
<reference key="2">
    <citation type="journal article" date="2004" name="Nat. Genet.">
        <title>Complete sequencing and characterization of 21,243 full-length human cDNAs.</title>
        <authorList>
            <person name="Ota T."/>
            <person name="Suzuki Y."/>
            <person name="Nishikawa T."/>
            <person name="Otsuki T."/>
            <person name="Sugiyama T."/>
            <person name="Irie R."/>
            <person name="Wakamatsu A."/>
            <person name="Hayashi K."/>
            <person name="Sato H."/>
            <person name="Nagai K."/>
            <person name="Kimura K."/>
            <person name="Makita H."/>
            <person name="Sekine M."/>
            <person name="Obayashi M."/>
            <person name="Nishi T."/>
            <person name="Shibahara T."/>
            <person name="Tanaka T."/>
            <person name="Ishii S."/>
            <person name="Yamamoto J."/>
            <person name="Saito K."/>
            <person name="Kawai Y."/>
            <person name="Isono Y."/>
            <person name="Nakamura Y."/>
            <person name="Nagahari K."/>
            <person name="Murakami K."/>
            <person name="Yasuda T."/>
            <person name="Iwayanagi T."/>
            <person name="Wagatsuma M."/>
            <person name="Shiratori A."/>
            <person name="Sudo H."/>
            <person name="Hosoiri T."/>
            <person name="Kaku Y."/>
            <person name="Kodaira H."/>
            <person name="Kondo H."/>
            <person name="Sugawara M."/>
            <person name="Takahashi M."/>
            <person name="Kanda K."/>
            <person name="Yokoi T."/>
            <person name="Furuya T."/>
            <person name="Kikkawa E."/>
            <person name="Omura Y."/>
            <person name="Abe K."/>
            <person name="Kamihara K."/>
            <person name="Katsuta N."/>
            <person name="Sato K."/>
            <person name="Tanikawa M."/>
            <person name="Yamazaki M."/>
            <person name="Ninomiya K."/>
            <person name="Ishibashi T."/>
            <person name="Yamashita H."/>
            <person name="Murakawa K."/>
            <person name="Fujimori K."/>
            <person name="Tanai H."/>
            <person name="Kimata M."/>
            <person name="Watanabe M."/>
            <person name="Hiraoka S."/>
            <person name="Chiba Y."/>
            <person name="Ishida S."/>
            <person name="Ono Y."/>
            <person name="Takiguchi S."/>
            <person name="Watanabe S."/>
            <person name="Yosida M."/>
            <person name="Hotuta T."/>
            <person name="Kusano J."/>
            <person name="Kanehori K."/>
            <person name="Takahashi-Fujii A."/>
            <person name="Hara H."/>
            <person name="Tanase T.-O."/>
            <person name="Nomura Y."/>
            <person name="Togiya S."/>
            <person name="Komai F."/>
            <person name="Hara R."/>
            <person name="Takeuchi K."/>
            <person name="Arita M."/>
            <person name="Imose N."/>
            <person name="Musashino K."/>
            <person name="Yuuki H."/>
            <person name="Oshima A."/>
            <person name="Sasaki N."/>
            <person name="Aotsuka S."/>
            <person name="Yoshikawa Y."/>
            <person name="Matsunawa H."/>
            <person name="Ichihara T."/>
            <person name="Shiohata N."/>
            <person name="Sano S."/>
            <person name="Moriya S."/>
            <person name="Momiyama H."/>
            <person name="Satoh N."/>
            <person name="Takami S."/>
            <person name="Terashima Y."/>
            <person name="Suzuki O."/>
            <person name="Nakagawa S."/>
            <person name="Senoh A."/>
            <person name="Mizoguchi H."/>
            <person name="Goto Y."/>
            <person name="Shimizu F."/>
            <person name="Wakebe H."/>
            <person name="Hishigaki H."/>
            <person name="Watanabe T."/>
            <person name="Sugiyama A."/>
            <person name="Takemoto M."/>
            <person name="Kawakami B."/>
            <person name="Yamazaki M."/>
            <person name="Watanabe K."/>
            <person name="Kumagai A."/>
            <person name="Itakura S."/>
            <person name="Fukuzumi Y."/>
            <person name="Fujimori Y."/>
            <person name="Komiyama M."/>
            <person name="Tashiro H."/>
            <person name="Tanigami A."/>
            <person name="Fujiwara T."/>
            <person name="Ono T."/>
            <person name="Yamada K."/>
            <person name="Fujii Y."/>
            <person name="Ozaki K."/>
            <person name="Hirao M."/>
            <person name="Ohmori Y."/>
            <person name="Kawabata A."/>
            <person name="Hikiji T."/>
            <person name="Kobatake N."/>
            <person name="Inagaki H."/>
            <person name="Ikema Y."/>
            <person name="Okamoto S."/>
            <person name="Okitani R."/>
            <person name="Kawakami T."/>
            <person name="Noguchi S."/>
            <person name="Itoh T."/>
            <person name="Shigeta K."/>
            <person name="Senba T."/>
            <person name="Matsumura K."/>
            <person name="Nakajima Y."/>
            <person name="Mizuno T."/>
            <person name="Morinaga M."/>
            <person name="Sasaki M."/>
            <person name="Togashi T."/>
            <person name="Oyama M."/>
            <person name="Hata H."/>
            <person name="Watanabe M."/>
            <person name="Komatsu T."/>
            <person name="Mizushima-Sugano J."/>
            <person name="Satoh T."/>
            <person name="Shirai Y."/>
            <person name="Takahashi Y."/>
            <person name="Nakagawa K."/>
            <person name="Okumura K."/>
            <person name="Nagase T."/>
            <person name="Nomura N."/>
            <person name="Kikuchi H."/>
            <person name="Masuho Y."/>
            <person name="Yamashita R."/>
            <person name="Nakai K."/>
            <person name="Yada T."/>
            <person name="Nakamura Y."/>
            <person name="Ohara O."/>
            <person name="Isogai T."/>
            <person name="Sugano S."/>
        </authorList>
    </citation>
    <scope>NUCLEOTIDE SEQUENCE [LARGE SCALE MRNA]</scope>
    <source>
        <tissue>Fetus</tissue>
        <tissue>Neuron</tissue>
    </source>
</reference>
<reference key="3">
    <citation type="submission" date="2004-06" db="EMBL/GenBank/DDBJ databases">
        <title>Cloning of human full open reading frames in Gateway(TM) system entry vector (pDONR201).</title>
        <authorList>
            <person name="Ebert L."/>
            <person name="Schick M."/>
            <person name="Neubert P."/>
            <person name="Schatten R."/>
            <person name="Henze S."/>
            <person name="Korn B."/>
        </authorList>
    </citation>
    <scope>NUCLEOTIDE SEQUENCE [LARGE SCALE MRNA]</scope>
</reference>
<reference key="4">
    <citation type="submission" date="2005-09" db="EMBL/GenBank/DDBJ databases">
        <authorList>
            <person name="Mural R.J."/>
            <person name="Istrail S."/>
            <person name="Sutton G.G."/>
            <person name="Florea L."/>
            <person name="Halpern A.L."/>
            <person name="Mobarry C.M."/>
            <person name="Lippert R."/>
            <person name="Walenz B."/>
            <person name="Shatkay H."/>
            <person name="Dew I."/>
            <person name="Miller J.R."/>
            <person name="Flanigan M.J."/>
            <person name="Edwards N.J."/>
            <person name="Bolanos R."/>
            <person name="Fasulo D."/>
            <person name="Halldorsson B.V."/>
            <person name="Hannenhalli S."/>
            <person name="Turner R."/>
            <person name="Yooseph S."/>
            <person name="Lu F."/>
            <person name="Nusskern D.R."/>
            <person name="Shue B.C."/>
            <person name="Zheng X.H."/>
            <person name="Zhong F."/>
            <person name="Delcher A.L."/>
            <person name="Huson D.H."/>
            <person name="Kravitz S.A."/>
            <person name="Mouchard L."/>
            <person name="Reinert K."/>
            <person name="Remington K.A."/>
            <person name="Clark A.G."/>
            <person name="Waterman M.S."/>
            <person name="Eichler E.E."/>
            <person name="Adams M.D."/>
            <person name="Hunkapiller M.W."/>
            <person name="Myers E.W."/>
            <person name="Venter J.C."/>
        </authorList>
    </citation>
    <scope>NUCLEOTIDE SEQUENCE [LARGE SCALE GENOMIC DNA]</scope>
</reference>
<reference key="5">
    <citation type="journal article" date="2004" name="Genome Res.">
        <title>The status, quality, and expansion of the NIH full-length cDNA project: the Mammalian Gene Collection (MGC).</title>
        <authorList>
            <consortium name="The MGC Project Team"/>
        </authorList>
    </citation>
    <scope>NUCLEOTIDE SEQUENCE [LARGE SCALE MRNA]</scope>
    <source>
        <tissue>Kidney</tissue>
    </source>
</reference>
<reference key="6">
    <citation type="journal article" date="2005" name="Oncogene">
        <title>The Ste20-like kinase Mst2 activates the human large tumor suppressor kinase Lats1.</title>
        <authorList>
            <person name="Chan E.H.Y."/>
            <person name="Nousiainen M."/>
            <person name="Chalamalasetty R.B."/>
            <person name="Schaefer A."/>
            <person name="Nigg E.A."/>
            <person name="Sillje H.H.W."/>
        </authorList>
    </citation>
    <scope>INTERACTION WITH STK3/MST2</scope>
</reference>
<reference key="7">
    <citation type="journal article" date="2006" name="FEBS J.">
        <title>Association of mammalian sterile twenty kinases, Mst1 and Mst2, with hSalvador via C-terminal coiled-coil domains, leads to its stabilization and phosphorylation.</title>
        <authorList>
            <person name="Callus B.A."/>
            <person name="Verhagen A.M."/>
            <person name="Vaux D.L."/>
        </authorList>
    </citation>
    <scope>FUNCTION</scope>
    <scope>HOMODIMERIZATION</scope>
    <scope>INTERACTION WITH STK3/MST2 AND STK4/MST1</scope>
    <scope>PHOSPHORYLATION</scope>
</reference>
<reference key="8">
    <citation type="journal article" date="2008" name="Mol. Cell">
        <title>Kinase-selective enrichment enables quantitative phosphoproteomics of the kinome across the cell cycle.</title>
        <authorList>
            <person name="Daub H."/>
            <person name="Olsen J.V."/>
            <person name="Bairlein M."/>
            <person name="Gnad F."/>
            <person name="Oppermann F.S."/>
            <person name="Korner R."/>
            <person name="Greff Z."/>
            <person name="Keri G."/>
            <person name="Stemmann O."/>
            <person name="Mann M."/>
        </authorList>
    </citation>
    <scope>IDENTIFICATION BY MASS SPECTROMETRY [LARGE SCALE ANALYSIS]</scope>
    <source>
        <tissue>Cervix carcinoma</tissue>
    </source>
</reference>
<reference key="9">
    <citation type="journal article" date="2009" name="Int. J. Mol. Med.">
        <title>The human WW45 protein enhances MST1-mediated apoptosis in vivo.</title>
        <authorList>
            <person name="Luo X."/>
            <person name="Li Z."/>
            <person name="Yan Q."/>
            <person name="Li X."/>
            <person name="Tao D."/>
            <person name="Wang J."/>
            <person name="Leng Y."/>
            <person name="Gardner K."/>
            <person name="Judge S.I."/>
            <person name="Li Q.Q."/>
            <person name="Hu J."/>
            <person name="Gong J."/>
        </authorList>
    </citation>
    <scope>FUNCTION</scope>
    <scope>SUBCELLULAR LOCATION</scope>
    <scope>INTERACTION WITH STK4/MST1</scope>
    <scope>TISSUE SPECIFICITY</scope>
</reference>
<reference key="10">
    <citation type="journal article" date="2009" name="Mol. Cell. Proteomics">
        <title>Large-scale proteomics analysis of the human kinome.</title>
        <authorList>
            <person name="Oppermann F.S."/>
            <person name="Gnad F."/>
            <person name="Olsen J.V."/>
            <person name="Hornberger R."/>
            <person name="Greff Z."/>
            <person name="Keri G."/>
            <person name="Mann M."/>
            <person name="Daub H."/>
        </authorList>
    </citation>
    <scope>PHOSPHORYLATION [LARGE SCALE ANALYSIS] AT THR-210</scope>
    <scope>IDENTIFICATION BY MASS SPECTROMETRY [LARGE SCALE ANALYSIS]</scope>
</reference>
<reference key="11">
    <citation type="journal article" date="2010" name="Curr. Biol.">
        <title>Ajuba LIM proteins are negative regulators of the Hippo signaling pathway.</title>
        <authorList>
            <person name="Das Thakur M."/>
            <person name="Feng Y."/>
            <person name="Jagannathan R."/>
            <person name="Seppa M.J."/>
            <person name="Skeath J.B."/>
            <person name="Longmore G.D."/>
        </authorList>
    </citation>
    <scope>INTERACTION WITH WTIP AND AJUBA</scope>
</reference>
<reference key="12">
    <citation type="journal article" date="2010" name="Nat. Cell Biol.">
        <title>Components of the Hippo pathway cooperate with Nek2 kinase to regulate centrosome disjunction.</title>
        <authorList>
            <person name="Mardin B.R."/>
            <person name="Lange C."/>
            <person name="Baxter J.E."/>
            <person name="Hardy T."/>
            <person name="Scholz S.R."/>
            <person name="Fry A.M."/>
            <person name="Schiebel E."/>
        </authorList>
    </citation>
    <scope>FUNCTION</scope>
    <scope>INTERACTION WITH NEK2</scope>
</reference>
<reference key="13">
    <citation type="journal article" date="2011" name="J. Mol. Med.">
        <title>Mammalian MST2 kinase and human Salvador activate and reduce estrogen receptor alpha in the absence of ligand.</title>
        <authorList>
            <person name="Park Y."/>
            <person name="Park J."/>
            <person name="Lee Y."/>
            <person name="Lim W."/>
            <person name="Oh B.C."/>
            <person name="Shin C."/>
            <person name="Kim W."/>
            <person name="Lee Y."/>
        </authorList>
    </citation>
    <scope>FUNCTION</scope>
    <scope>INTERACTION WITH ESR1</scope>
</reference>
<reference key="14">
    <citation type="journal article" date="2013" name="J. Proteome Res.">
        <title>Toward a comprehensive characterization of a human cancer cell phosphoproteome.</title>
        <authorList>
            <person name="Zhou H."/>
            <person name="Di Palma S."/>
            <person name="Preisinger C."/>
            <person name="Peng M."/>
            <person name="Polat A.N."/>
            <person name="Heck A.J."/>
            <person name="Mohammed S."/>
        </authorList>
    </citation>
    <scope>PHOSPHORYLATION [LARGE SCALE ANALYSIS] AT SER-94</scope>
    <scope>IDENTIFICATION BY MASS SPECTROMETRY [LARGE SCALE ANALYSIS]</scope>
    <source>
        <tissue>Cervix carcinoma</tissue>
    </source>
</reference>
<reference key="15">
    <citation type="journal article" date="2016" name="Genes Dev.">
        <title>DLG5 connects cell polarity and Hippo signaling protein networks by linking PAR-1 with MST1/2.</title>
        <authorList>
            <person name="Kwan J."/>
            <person name="Sczaniecka A."/>
            <person name="Arash E.H."/>
            <person name="Nguyen L."/>
            <person name="Chen C.C."/>
            <person name="Ratkovic S."/>
            <person name="Klezovitch O."/>
            <person name="Attisano L."/>
            <person name="McNeill H."/>
            <person name="Emili A."/>
            <person name="Vasioukhin V."/>
        </authorList>
    </citation>
    <scope>INTERACTION WITH STK3</scope>
</reference>
<reference evidence="16" key="16">
    <citation type="journal article" date="2017" name="Elife">
        <title>SAV1 promotes Hippo kinase activation through antagonizing the PP2A phosphatase STRIPAK.</title>
        <authorList>
            <person name="Bae S.J."/>
            <person name="Ni L."/>
            <person name="Osinski A."/>
            <person name="Tomchick D.R."/>
            <person name="Brautigam C.A."/>
            <person name="Luo X."/>
        </authorList>
    </citation>
    <scope>X-RAY CRYSTALLOGRAPHY (2.96 ANGSTROMS) OF 291-383 IN COMPLEX WITH STK3</scope>
    <scope>FUNCTION</scope>
    <scope>INTERACTION WITH STK3</scope>
    <scope>MUTAGENESIS OF GLU-346; ILE-350; TYR-357; ARG-358; LEU-361; LEU-365 AND ARG-368</scope>
    <scope>SUBCELLULAR LOCATION</scope>
</reference>
<reference key="17">
    <citation type="journal article" date="2002" name="Cell">
        <title>Salvador promotes both cell cycle exit and apoptosis in Drosophila and is mutated in human cancer cell lines.</title>
        <authorList>
            <person name="Tapon N."/>
            <person name="Harvey K.F."/>
            <person name="Bell D.W."/>
            <person name="Wahrer D.C.R."/>
            <person name="Schiripo T.A."/>
            <person name="Haber D.A."/>
            <person name="Hariharan I.K."/>
        </authorList>
    </citation>
    <scope>VARIANT ASP-185</scope>
</reference>
<gene>
    <name evidence="15" type="primary">SAV1</name>
    <name type="synonym">WW45</name>
</gene>
<proteinExistence type="evidence at protein level"/>